<dbReference type="EC" id="2.8.1.10" evidence="1"/>
<dbReference type="EMBL" id="CP000769">
    <property type="protein sequence ID" value="ABS25554.1"/>
    <property type="molecule type" value="Genomic_DNA"/>
</dbReference>
<dbReference type="RefSeq" id="WP_011985660.1">
    <property type="nucleotide sequence ID" value="NC_009675.1"/>
</dbReference>
<dbReference type="SMR" id="A7HA08"/>
<dbReference type="STRING" id="404589.Anae109_1346"/>
<dbReference type="KEGG" id="afw:Anae109_1346"/>
<dbReference type="eggNOG" id="COG2022">
    <property type="taxonomic scope" value="Bacteria"/>
</dbReference>
<dbReference type="HOGENOM" id="CLU_062233_1_0_7"/>
<dbReference type="OrthoDB" id="9805935at2"/>
<dbReference type="UniPathway" id="UPA00060"/>
<dbReference type="Proteomes" id="UP000006382">
    <property type="component" value="Chromosome"/>
</dbReference>
<dbReference type="GO" id="GO:0005737">
    <property type="term" value="C:cytoplasm"/>
    <property type="evidence" value="ECO:0007669"/>
    <property type="project" value="UniProtKB-SubCell"/>
</dbReference>
<dbReference type="GO" id="GO:1990107">
    <property type="term" value="F:thiazole synthase activity"/>
    <property type="evidence" value="ECO:0007669"/>
    <property type="project" value="UniProtKB-EC"/>
</dbReference>
<dbReference type="GO" id="GO:0009229">
    <property type="term" value="P:thiamine diphosphate biosynthetic process"/>
    <property type="evidence" value="ECO:0007669"/>
    <property type="project" value="UniProtKB-UniRule"/>
</dbReference>
<dbReference type="CDD" id="cd04728">
    <property type="entry name" value="ThiG"/>
    <property type="match status" value="1"/>
</dbReference>
<dbReference type="Gene3D" id="3.20.20.70">
    <property type="entry name" value="Aldolase class I"/>
    <property type="match status" value="1"/>
</dbReference>
<dbReference type="HAMAP" id="MF_00443">
    <property type="entry name" value="ThiG"/>
    <property type="match status" value="1"/>
</dbReference>
<dbReference type="InterPro" id="IPR013785">
    <property type="entry name" value="Aldolase_TIM"/>
</dbReference>
<dbReference type="InterPro" id="IPR033983">
    <property type="entry name" value="Thiazole_synthase_ThiG"/>
</dbReference>
<dbReference type="InterPro" id="IPR008867">
    <property type="entry name" value="ThiG"/>
</dbReference>
<dbReference type="PANTHER" id="PTHR34266">
    <property type="entry name" value="THIAZOLE SYNTHASE"/>
    <property type="match status" value="1"/>
</dbReference>
<dbReference type="PANTHER" id="PTHR34266:SF2">
    <property type="entry name" value="THIAZOLE SYNTHASE"/>
    <property type="match status" value="1"/>
</dbReference>
<dbReference type="Pfam" id="PF05690">
    <property type="entry name" value="ThiG"/>
    <property type="match status" value="1"/>
</dbReference>
<dbReference type="SUPFAM" id="SSF110399">
    <property type="entry name" value="ThiG-like"/>
    <property type="match status" value="1"/>
</dbReference>
<feature type="chain" id="PRO_1000025991" description="Thiazole synthase">
    <location>
        <begin position="1"/>
        <end position="257"/>
    </location>
</feature>
<feature type="active site" description="Schiff-base intermediate with DXP" evidence="1">
    <location>
        <position position="98"/>
    </location>
</feature>
<feature type="binding site" evidence="1">
    <location>
        <position position="159"/>
    </location>
    <ligand>
        <name>1-deoxy-D-xylulose 5-phosphate</name>
        <dbReference type="ChEBI" id="CHEBI:57792"/>
    </ligand>
</feature>
<feature type="binding site" evidence="1">
    <location>
        <begin position="185"/>
        <end position="186"/>
    </location>
    <ligand>
        <name>1-deoxy-D-xylulose 5-phosphate</name>
        <dbReference type="ChEBI" id="CHEBI:57792"/>
    </ligand>
</feature>
<feature type="binding site" evidence="1">
    <location>
        <begin position="207"/>
        <end position="208"/>
    </location>
    <ligand>
        <name>1-deoxy-D-xylulose 5-phosphate</name>
        <dbReference type="ChEBI" id="CHEBI:57792"/>
    </ligand>
</feature>
<organism>
    <name type="scientific">Anaeromyxobacter sp. (strain Fw109-5)</name>
    <dbReference type="NCBI Taxonomy" id="404589"/>
    <lineage>
        <taxon>Bacteria</taxon>
        <taxon>Pseudomonadati</taxon>
        <taxon>Myxococcota</taxon>
        <taxon>Myxococcia</taxon>
        <taxon>Myxococcales</taxon>
        <taxon>Cystobacterineae</taxon>
        <taxon>Anaeromyxobacteraceae</taxon>
        <taxon>Anaeromyxobacter</taxon>
    </lineage>
</organism>
<reference key="1">
    <citation type="journal article" date="2015" name="Genome Announc.">
        <title>Complete genome sequence of Anaeromyxobacter sp. Fw109-5, an anaerobic, metal-reducing bacterium isolated from a contaminated subsurface environment.</title>
        <authorList>
            <person name="Hwang C."/>
            <person name="Copeland A."/>
            <person name="Lucas S."/>
            <person name="Lapidus A."/>
            <person name="Barry K."/>
            <person name="Glavina Del Rio T."/>
            <person name="Dalin E."/>
            <person name="Tice H."/>
            <person name="Pitluck S."/>
            <person name="Sims D."/>
            <person name="Brettin T."/>
            <person name="Bruce D.C."/>
            <person name="Detter J.C."/>
            <person name="Han C.S."/>
            <person name="Schmutz J."/>
            <person name="Larimer F.W."/>
            <person name="Land M.L."/>
            <person name="Hauser L.J."/>
            <person name="Kyrpides N."/>
            <person name="Lykidis A."/>
            <person name="Richardson P."/>
            <person name="Belieav A."/>
            <person name="Sanford R.A."/>
            <person name="Loeffler F.E."/>
            <person name="Fields M.W."/>
        </authorList>
    </citation>
    <scope>NUCLEOTIDE SEQUENCE [LARGE SCALE GENOMIC DNA]</scope>
    <source>
        <strain>Fw109-5</strain>
    </source>
</reference>
<accession>A7HA08</accession>
<proteinExistence type="inferred from homology"/>
<gene>
    <name evidence="1" type="primary">thiG</name>
    <name type="ordered locus">Anae109_1346</name>
</gene>
<protein>
    <recommendedName>
        <fullName evidence="1">Thiazole synthase</fullName>
        <ecNumber evidence="1">2.8.1.10</ecNumber>
    </recommendedName>
</protein>
<keyword id="KW-0963">Cytoplasm</keyword>
<keyword id="KW-1185">Reference proteome</keyword>
<keyword id="KW-0704">Schiff base</keyword>
<keyword id="KW-0784">Thiamine biosynthesis</keyword>
<keyword id="KW-0808">Transferase</keyword>
<comment type="function">
    <text evidence="1">Catalyzes the rearrangement of 1-deoxy-D-xylulose 5-phosphate (DXP) to produce the thiazole phosphate moiety of thiamine. Sulfur is provided by the thiocarboxylate moiety of the carrier protein ThiS. In vitro, sulfur can be provided by H(2)S.</text>
</comment>
<comment type="catalytic activity">
    <reaction evidence="1">
        <text>[ThiS sulfur-carrier protein]-C-terminal-Gly-aminoethanethioate + 2-iminoacetate + 1-deoxy-D-xylulose 5-phosphate = [ThiS sulfur-carrier protein]-C-terminal Gly-Gly + 2-[(2R,5Z)-2-carboxy-4-methylthiazol-5(2H)-ylidene]ethyl phosphate + 2 H2O + H(+)</text>
        <dbReference type="Rhea" id="RHEA:26297"/>
        <dbReference type="Rhea" id="RHEA-COMP:12909"/>
        <dbReference type="Rhea" id="RHEA-COMP:19908"/>
        <dbReference type="ChEBI" id="CHEBI:15377"/>
        <dbReference type="ChEBI" id="CHEBI:15378"/>
        <dbReference type="ChEBI" id="CHEBI:57792"/>
        <dbReference type="ChEBI" id="CHEBI:62899"/>
        <dbReference type="ChEBI" id="CHEBI:77846"/>
        <dbReference type="ChEBI" id="CHEBI:90778"/>
        <dbReference type="ChEBI" id="CHEBI:232372"/>
        <dbReference type="EC" id="2.8.1.10"/>
    </reaction>
</comment>
<comment type="pathway">
    <text evidence="1">Cofactor biosynthesis; thiamine diphosphate biosynthesis.</text>
</comment>
<comment type="subunit">
    <text evidence="1">Homotetramer. Forms heterodimers with either ThiH or ThiS.</text>
</comment>
<comment type="subcellular location">
    <subcellularLocation>
        <location evidence="1">Cytoplasm</location>
    </subcellularLocation>
</comment>
<comment type="similarity">
    <text evidence="1">Belongs to the ThiG family.</text>
</comment>
<evidence type="ECO:0000255" key="1">
    <source>
        <dbReference type="HAMAP-Rule" id="MF_00443"/>
    </source>
</evidence>
<sequence length="257" mass="26933">MADTWSIGAHTFTSRLLVGTGKYPDFTTMQRALVASGAEVVTVAVRRLELSKSGEASLLEWIPKGMKLLPNTAACFTAEEAIRTARLGRELEMGDLVKLEVIGDRRTLFPDVEGLVAAAKVLVKEGFTVLPYTNDDPVTAKKLEDAGCAAVMPLGAPIGSGLGIRNPYNLRIIMETVKVPVLVDAGVGTASDAAVAMELGAVAVLMNTAIAEARDPVLMAEAMRAGVEGGRKAYLAGRIPTKLHASASSPMTGLIGT</sequence>
<name>THIG_ANADF</name>